<comment type="function">
    <text>Catalyzes the oxidation of mono- and o-diphenols to o-diquinones.</text>
</comment>
<comment type="catalytic activity">
    <reaction>
        <text>2 catechol + O2 = 2 1,2-benzoquinone + 2 H2O</text>
        <dbReference type="Rhea" id="RHEA:21632"/>
        <dbReference type="ChEBI" id="CHEBI:15377"/>
        <dbReference type="ChEBI" id="CHEBI:15379"/>
        <dbReference type="ChEBI" id="CHEBI:17253"/>
        <dbReference type="ChEBI" id="CHEBI:18135"/>
        <dbReference type="EC" id="1.10.3.1"/>
    </reaction>
</comment>
<comment type="cofactor">
    <cofactor evidence="1">
        <name>Cu(2+)</name>
        <dbReference type="ChEBI" id="CHEBI:29036"/>
    </cofactor>
    <text evidence="1">Binds 2 copper ions per subunit.</text>
</comment>
<comment type="subcellular location">
    <subcellularLocation>
        <location>Plastid</location>
        <location>Chloroplast thylakoid lumen</location>
    </subcellularLocation>
</comment>
<comment type="similarity">
    <text evidence="4">Belongs to the tyrosinase family.</text>
</comment>
<feature type="transit peptide" description="Chloroplast" evidence="2">
    <location>
        <begin position="1"/>
        <end position="101"/>
    </location>
</feature>
<feature type="chain" id="PRO_0000035918" description="Polyphenol oxidase, chloroplastic">
    <location>
        <begin position="102"/>
        <end position="639"/>
    </location>
</feature>
<feature type="region of interest" description="Disordered" evidence="3">
    <location>
        <begin position="35"/>
        <end position="58"/>
    </location>
</feature>
<feature type="binding site" evidence="1">
    <location>
        <position position="193"/>
    </location>
    <ligand>
        <name>Cu cation</name>
        <dbReference type="ChEBI" id="CHEBI:23378"/>
        <label>A</label>
    </ligand>
</feature>
<feature type="binding site" evidence="1">
    <location>
        <position position="214"/>
    </location>
    <ligand>
        <name>Cu cation</name>
        <dbReference type="ChEBI" id="CHEBI:23378"/>
        <label>A</label>
    </ligand>
</feature>
<feature type="binding site" evidence="1">
    <location>
        <position position="223"/>
    </location>
    <ligand>
        <name>Cu cation</name>
        <dbReference type="ChEBI" id="CHEBI:23378"/>
        <label>A</label>
    </ligand>
</feature>
<feature type="binding site" evidence="1">
    <location>
        <position position="354"/>
    </location>
    <ligand>
        <name>Cu cation</name>
        <dbReference type="ChEBI" id="CHEBI:23378"/>
        <label>B</label>
    </ligand>
</feature>
<feature type="binding site" evidence="1">
    <location>
        <position position="358"/>
    </location>
    <ligand>
        <name>Cu cation</name>
        <dbReference type="ChEBI" id="CHEBI:23378"/>
        <label>B</label>
    </ligand>
</feature>
<feature type="binding site" evidence="1">
    <location>
        <position position="388"/>
    </location>
    <ligand>
        <name>Cu cation</name>
        <dbReference type="ChEBI" id="CHEBI:23378"/>
        <label>B</label>
    </ligand>
</feature>
<feature type="disulfide bond" evidence="1">
    <location>
        <begin position="111"/>
        <end position="127"/>
    </location>
</feature>
<feature type="disulfide bond" evidence="1">
    <location>
        <begin position="126"/>
        <end position="194"/>
    </location>
</feature>
<feature type="cross-link" description="2'-(S-cysteinyl)-histidine (Cys-His)" evidence="1">
    <location>
        <begin position="197"/>
        <end position="214"/>
    </location>
</feature>
<proteinExistence type="evidence at transcript level"/>
<dbReference type="EC" id="1.10.3.1"/>
<dbReference type="EMBL" id="U19270">
    <property type="protein sequence ID" value="AAC49041.1"/>
    <property type="molecule type" value="mRNA"/>
</dbReference>
<dbReference type="EMBL" id="Z66559">
    <property type="protein sequence ID" value="CAA91448.1"/>
    <property type="molecule type" value="mRNA"/>
</dbReference>
<dbReference type="SMR" id="P43310"/>
<dbReference type="Proteomes" id="UP001155700">
    <property type="component" value="Unplaced"/>
</dbReference>
<dbReference type="GO" id="GO:0009543">
    <property type="term" value="C:chloroplast thylakoid lumen"/>
    <property type="evidence" value="ECO:0007669"/>
    <property type="project" value="UniProtKB-SubCell"/>
</dbReference>
<dbReference type="GO" id="GO:0004097">
    <property type="term" value="F:catechol oxidase activity"/>
    <property type="evidence" value="ECO:0007669"/>
    <property type="project" value="UniProtKB-EC"/>
</dbReference>
<dbReference type="GO" id="GO:0046872">
    <property type="term" value="F:metal ion binding"/>
    <property type="evidence" value="ECO:0007669"/>
    <property type="project" value="UniProtKB-KW"/>
</dbReference>
<dbReference type="GO" id="GO:0046148">
    <property type="term" value="P:pigment biosynthetic process"/>
    <property type="evidence" value="ECO:0007669"/>
    <property type="project" value="InterPro"/>
</dbReference>
<dbReference type="Gene3D" id="1.10.1280.10">
    <property type="entry name" value="Di-copper center containing domain from catechol oxidase"/>
    <property type="match status" value="1"/>
</dbReference>
<dbReference type="InterPro" id="IPR008922">
    <property type="entry name" value="Di-copper_centre_dom_sf"/>
</dbReference>
<dbReference type="InterPro" id="IPR016213">
    <property type="entry name" value="Polyphenol_oxidase"/>
</dbReference>
<dbReference type="InterPro" id="IPR022740">
    <property type="entry name" value="Polyphenol_oxidase_C"/>
</dbReference>
<dbReference type="InterPro" id="IPR022739">
    <property type="entry name" value="Polyphenol_oxidase_cen"/>
</dbReference>
<dbReference type="InterPro" id="IPR050316">
    <property type="entry name" value="Tyrosinase/Hemocyanin"/>
</dbReference>
<dbReference type="InterPro" id="IPR002227">
    <property type="entry name" value="Tyrosinase_Cu-bd"/>
</dbReference>
<dbReference type="PANTHER" id="PTHR11474:SF76">
    <property type="entry name" value="SHKT DOMAIN-CONTAINING PROTEIN"/>
    <property type="match status" value="1"/>
</dbReference>
<dbReference type="PANTHER" id="PTHR11474">
    <property type="entry name" value="TYROSINASE FAMILY MEMBER"/>
    <property type="match status" value="1"/>
</dbReference>
<dbReference type="Pfam" id="PF12142">
    <property type="entry name" value="PPO1_DWL"/>
    <property type="match status" value="1"/>
</dbReference>
<dbReference type="Pfam" id="PF12143">
    <property type="entry name" value="PPO1_KFDV"/>
    <property type="match status" value="1"/>
</dbReference>
<dbReference type="Pfam" id="PF00264">
    <property type="entry name" value="Tyrosinase"/>
    <property type="match status" value="1"/>
</dbReference>
<dbReference type="PIRSF" id="PIRSF000290">
    <property type="entry name" value="PPO_plant"/>
    <property type="match status" value="1"/>
</dbReference>
<dbReference type="PRINTS" id="PR00092">
    <property type="entry name" value="TYROSINASE"/>
</dbReference>
<dbReference type="SUPFAM" id="SSF48056">
    <property type="entry name" value="Di-copper centre-containing domain"/>
    <property type="match status" value="1"/>
</dbReference>
<dbReference type="PROSITE" id="PS00497">
    <property type="entry name" value="TYROSINASE_1"/>
    <property type="match status" value="1"/>
</dbReference>
<dbReference type="PROSITE" id="PS00498">
    <property type="entry name" value="TYROSINASE_2"/>
    <property type="match status" value="1"/>
</dbReference>
<accession>P43310</accession>
<organism>
    <name type="scientific">Spinacia oleracea</name>
    <name type="common">Spinach</name>
    <dbReference type="NCBI Taxonomy" id="3562"/>
    <lineage>
        <taxon>Eukaryota</taxon>
        <taxon>Viridiplantae</taxon>
        <taxon>Streptophyta</taxon>
        <taxon>Embryophyta</taxon>
        <taxon>Tracheophyta</taxon>
        <taxon>Spermatophyta</taxon>
        <taxon>Magnoliopsida</taxon>
        <taxon>eudicotyledons</taxon>
        <taxon>Gunneridae</taxon>
        <taxon>Pentapetalae</taxon>
        <taxon>Caryophyllales</taxon>
        <taxon>Chenopodiaceae</taxon>
        <taxon>Chenopodioideae</taxon>
        <taxon>Anserineae</taxon>
        <taxon>Spinacia</taxon>
    </lineage>
</organism>
<name>PPO_SPIOL</name>
<evidence type="ECO:0000250" key="1">
    <source>
        <dbReference type="UniProtKB" id="Q9ZP19"/>
    </source>
</evidence>
<evidence type="ECO:0000255" key="2"/>
<evidence type="ECO:0000256" key="3">
    <source>
        <dbReference type="SAM" id="MobiDB-lite"/>
    </source>
</evidence>
<evidence type="ECO:0000305" key="4"/>
<reference key="1">
    <citation type="journal article" date="1995" name="Biochemistry">
        <title>Spinach thylakoid polyphenol oxidase: cloning, characterization, and relation to a putative protein kinase.</title>
        <authorList>
            <person name="Hind G."/>
            <person name="Marshak D.R."/>
            <person name="Coughlan S.J."/>
        </authorList>
    </citation>
    <scope>NUCLEOTIDE SEQUENCE [MRNA]</scope>
    <source>
        <strain>cv. Hybrid 424</strain>
        <tissue>Leaf</tissue>
    </source>
</reference>
<sequence length="639" mass="73237">MATLSSPTIITTTSILLNNPFLPKTPQLSAHHHRGVRSVNGKVSCQTKNNNGNDENNQFQLIQNPNTNTPYLLDRRNILLGLGGMYAALGSEGANYYNTLAAPILPDVEKCTLSDALWDGSVGDHCCPPPFDLNITKDFEFKNYHNHVKKVRRPAHKAYEDQEWLNDYKRAIAIMKSLPMSDPRSHMQQARVHCAYCDGSYPVLGHNDTRLEVHASWLFPSFHRWYLYFYERILGKLINKPDFALPYWNWDHRDGMRIPEIFKEMDSPLFDPNRNTNHLDKMMNLSFVSDEEGSDVNEDDQYEENILLMRKAMVYPSVSDDPNKAELFLGSPYRAGDKMEGDVSGAGILERMPHNSVHVWTRSNTIKGNQDMGAFWSAGRDPLFYCHHSNVDRMWSLWTDVLHGGNFPKTPEYDDYRNAYFYFYDENANPVRVYVRDSFDTERLGYKYEDQELPWMSITQQQQQQQRQQQRQPLLGGRLKTRTFSLVKKVLTELKVMLPLPLKYSVIKTKVDRPKKSRTKEDKLEHEEVLVINFKLGKSKDFIKFDVYINDGTDYKPEDKTKINLEYAGSFTSLTHGGGGGGGDMSHMAEEDMGKNTVLKLALNQLLEDLDATDDDSIQVTIVPKSGTDSIVITGIDIE</sequence>
<protein>
    <recommendedName>
        <fullName>Polyphenol oxidase, chloroplastic</fullName>
        <shortName>PPO</shortName>
        <ecNumber>1.10.3.1</ecNumber>
    </recommendedName>
    <alternativeName>
        <fullName>Catechol oxidase</fullName>
    </alternativeName>
</protein>
<keyword id="KW-0150">Chloroplast</keyword>
<keyword id="KW-0186">Copper</keyword>
<keyword id="KW-1015">Disulfide bond</keyword>
<keyword id="KW-0479">Metal-binding</keyword>
<keyword id="KW-0560">Oxidoreductase</keyword>
<keyword id="KW-0934">Plastid</keyword>
<keyword id="KW-1185">Reference proteome</keyword>
<keyword id="KW-0883">Thioether bond</keyword>
<keyword id="KW-0793">Thylakoid</keyword>
<keyword id="KW-0809">Transit peptide</keyword>